<gene>
    <name evidence="1" type="primary">prmA</name>
    <name type="ordered locus">SACOL1635</name>
</gene>
<reference key="1">
    <citation type="journal article" date="2005" name="J. Bacteriol.">
        <title>Insights on evolution of virulence and resistance from the complete genome analysis of an early methicillin-resistant Staphylococcus aureus strain and a biofilm-producing methicillin-resistant Staphylococcus epidermidis strain.</title>
        <authorList>
            <person name="Gill S.R."/>
            <person name="Fouts D.E."/>
            <person name="Archer G.L."/>
            <person name="Mongodin E.F."/>
            <person name="DeBoy R.T."/>
            <person name="Ravel J."/>
            <person name="Paulsen I.T."/>
            <person name="Kolonay J.F."/>
            <person name="Brinkac L.M."/>
            <person name="Beanan M.J."/>
            <person name="Dodson R.J."/>
            <person name="Daugherty S.C."/>
            <person name="Madupu R."/>
            <person name="Angiuoli S.V."/>
            <person name="Durkin A.S."/>
            <person name="Haft D.H."/>
            <person name="Vamathevan J.J."/>
            <person name="Khouri H."/>
            <person name="Utterback T.R."/>
            <person name="Lee C."/>
            <person name="Dimitrov G."/>
            <person name="Jiang L."/>
            <person name="Qin H."/>
            <person name="Weidman J."/>
            <person name="Tran K."/>
            <person name="Kang K.H."/>
            <person name="Hance I.R."/>
            <person name="Nelson K.E."/>
            <person name="Fraser C.M."/>
        </authorList>
    </citation>
    <scope>NUCLEOTIDE SEQUENCE [LARGE SCALE GENOMIC DNA]</scope>
    <source>
        <strain>COL</strain>
    </source>
</reference>
<protein>
    <recommendedName>
        <fullName evidence="1">Ribosomal protein L11 methyltransferase</fullName>
        <shortName evidence="1">L11 Mtase</shortName>
        <ecNumber evidence="1">2.1.1.-</ecNumber>
    </recommendedName>
</protein>
<feature type="chain" id="PRO_0000192302" description="Ribosomal protein L11 methyltransferase">
    <location>
        <begin position="1"/>
        <end position="312"/>
    </location>
</feature>
<feature type="binding site" evidence="1">
    <location>
        <position position="160"/>
    </location>
    <ligand>
        <name>S-adenosyl-L-methionine</name>
        <dbReference type="ChEBI" id="CHEBI:59789"/>
    </ligand>
</feature>
<feature type="binding site" evidence="1">
    <location>
        <position position="181"/>
    </location>
    <ligand>
        <name>S-adenosyl-L-methionine</name>
        <dbReference type="ChEBI" id="CHEBI:59789"/>
    </ligand>
</feature>
<feature type="binding site" evidence="1">
    <location>
        <position position="203"/>
    </location>
    <ligand>
        <name>S-adenosyl-L-methionine</name>
        <dbReference type="ChEBI" id="CHEBI:59789"/>
    </ligand>
</feature>
<feature type="binding site" evidence="1">
    <location>
        <position position="246"/>
    </location>
    <ligand>
        <name>S-adenosyl-L-methionine</name>
        <dbReference type="ChEBI" id="CHEBI:59789"/>
    </ligand>
</feature>
<evidence type="ECO:0000255" key="1">
    <source>
        <dbReference type="HAMAP-Rule" id="MF_00735"/>
    </source>
</evidence>
<sequence>MNWTELSIIINHEAVELATNILENHGSNGVVIEDSDGLINQPEDKYGEIYALKKEDYPDKGVRLKAYFNEMTYDDKLRQQIKDELLNLDELDQHNVQFSEQIIAETDWENEWKNYFHPFRASKKFTIVPSWETYAKEADEELCIELDPGMAFGTGDHPTTSMCLKAIETYVLPQHSVIDVGTGSGILSIASHLIGVKRIKALDIDEMAVSVAKENFRRNHCETLIEAVPGNLLKDETEKFDIVIANILAHIIDEMIEDAYNTLNEGGYFITSGIIKEKYEGIQSHMERVGFKIISEQHDNGWVCLVGQKVSE</sequence>
<name>PRMA_STAAC</name>
<comment type="function">
    <text evidence="1">Methylates ribosomal protein L11.</text>
</comment>
<comment type="catalytic activity">
    <reaction evidence="1">
        <text>L-lysyl-[protein] + 3 S-adenosyl-L-methionine = N(6),N(6),N(6)-trimethyl-L-lysyl-[protein] + 3 S-adenosyl-L-homocysteine + 3 H(+)</text>
        <dbReference type="Rhea" id="RHEA:54192"/>
        <dbReference type="Rhea" id="RHEA-COMP:9752"/>
        <dbReference type="Rhea" id="RHEA-COMP:13826"/>
        <dbReference type="ChEBI" id="CHEBI:15378"/>
        <dbReference type="ChEBI" id="CHEBI:29969"/>
        <dbReference type="ChEBI" id="CHEBI:57856"/>
        <dbReference type="ChEBI" id="CHEBI:59789"/>
        <dbReference type="ChEBI" id="CHEBI:61961"/>
    </reaction>
</comment>
<comment type="subcellular location">
    <subcellularLocation>
        <location evidence="1">Cytoplasm</location>
    </subcellularLocation>
</comment>
<comment type="similarity">
    <text evidence="1">Belongs to the methyltransferase superfamily. PrmA family.</text>
</comment>
<keyword id="KW-0963">Cytoplasm</keyword>
<keyword id="KW-0489">Methyltransferase</keyword>
<keyword id="KW-0949">S-adenosyl-L-methionine</keyword>
<keyword id="KW-0808">Transferase</keyword>
<proteinExistence type="inferred from homology"/>
<organism>
    <name type="scientific">Staphylococcus aureus (strain COL)</name>
    <dbReference type="NCBI Taxonomy" id="93062"/>
    <lineage>
        <taxon>Bacteria</taxon>
        <taxon>Bacillati</taxon>
        <taxon>Bacillota</taxon>
        <taxon>Bacilli</taxon>
        <taxon>Bacillales</taxon>
        <taxon>Staphylococcaceae</taxon>
        <taxon>Staphylococcus</taxon>
    </lineage>
</organism>
<accession>Q5HFI2</accession>
<dbReference type="EC" id="2.1.1.-" evidence="1"/>
<dbReference type="EMBL" id="CP000046">
    <property type="protein sequence ID" value="AAW38251.1"/>
    <property type="molecule type" value="Genomic_DNA"/>
</dbReference>
<dbReference type="RefSeq" id="WP_001104618.1">
    <property type="nucleotide sequence ID" value="NC_002951.2"/>
</dbReference>
<dbReference type="SMR" id="Q5HFI2"/>
<dbReference type="KEGG" id="sac:SACOL1635"/>
<dbReference type="HOGENOM" id="CLU_049382_0_1_9"/>
<dbReference type="Proteomes" id="UP000000530">
    <property type="component" value="Chromosome"/>
</dbReference>
<dbReference type="GO" id="GO:0005737">
    <property type="term" value="C:cytoplasm"/>
    <property type="evidence" value="ECO:0007669"/>
    <property type="project" value="UniProtKB-SubCell"/>
</dbReference>
<dbReference type="GO" id="GO:0016279">
    <property type="term" value="F:protein-lysine N-methyltransferase activity"/>
    <property type="evidence" value="ECO:0007669"/>
    <property type="project" value="RHEA"/>
</dbReference>
<dbReference type="GO" id="GO:0032259">
    <property type="term" value="P:methylation"/>
    <property type="evidence" value="ECO:0007669"/>
    <property type="project" value="UniProtKB-KW"/>
</dbReference>
<dbReference type="CDD" id="cd02440">
    <property type="entry name" value="AdoMet_MTases"/>
    <property type="match status" value="1"/>
</dbReference>
<dbReference type="Gene3D" id="3.40.50.150">
    <property type="entry name" value="Vaccinia Virus protein VP39"/>
    <property type="match status" value="1"/>
</dbReference>
<dbReference type="HAMAP" id="MF_00735">
    <property type="entry name" value="Methyltr_PrmA"/>
    <property type="match status" value="1"/>
</dbReference>
<dbReference type="InterPro" id="IPR050078">
    <property type="entry name" value="Ribosomal_L11_MeTrfase_PrmA"/>
</dbReference>
<dbReference type="InterPro" id="IPR004498">
    <property type="entry name" value="Ribosomal_PrmA_MeTrfase"/>
</dbReference>
<dbReference type="InterPro" id="IPR029063">
    <property type="entry name" value="SAM-dependent_MTases_sf"/>
</dbReference>
<dbReference type="NCBIfam" id="TIGR00406">
    <property type="entry name" value="prmA"/>
    <property type="match status" value="1"/>
</dbReference>
<dbReference type="PANTHER" id="PTHR43648">
    <property type="entry name" value="ELECTRON TRANSFER FLAVOPROTEIN BETA SUBUNIT LYSINE METHYLTRANSFERASE"/>
    <property type="match status" value="1"/>
</dbReference>
<dbReference type="PANTHER" id="PTHR43648:SF1">
    <property type="entry name" value="ELECTRON TRANSFER FLAVOPROTEIN BETA SUBUNIT LYSINE METHYLTRANSFERASE"/>
    <property type="match status" value="1"/>
</dbReference>
<dbReference type="Pfam" id="PF06325">
    <property type="entry name" value="PrmA"/>
    <property type="match status" value="1"/>
</dbReference>
<dbReference type="PIRSF" id="PIRSF000401">
    <property type="entry name" value="RPL11_MTase"/>
    <property type="match status" value="1"/>
</dbReference>
<dbReference type="SUPFAM" id="SSF53335">
    <property type="entry name" value="S-adenosyl-L-methionine-dependent methyltransferases"/>
    <property type="match status" value="1"/>
</dbReference>